<evidence type="ECO:0000255" key="1">
    <source>
        <dbReference type="HAMAP-Rule" id="MF_00019"/>
    </source>
</evidence>
<evidence type="ECO:0000305" key="2"/>
<dbReference type="EC" id="2.3.1.274" evidence="1"/>
<dbReference type="EMBL" id="CP000413">
    <property type="protein sequence ID" value="ABJ60163.1"/>
    <property type="status" value="ALT_INIT"/>
    <property type="molecule type" value="Genomic_DNA"/>
</dbReference>
<dbReference type="RefSeq" id="WP_003647519.1">
    <property type="nucleotide sequence ID" value="NZ_WBMG01000005.1"/>
</dbReference>
<dbReference type="SMR" id="Q044F9"/>
<dbReference type="GeneID" id="29639195"/>
<dbReference type="KEGG" id="lga:LGAS_0772"/>
<dbReference type="HOGENOM" id="CLU_039379_1_1_9"/>
<dbReference type="BioCyc" id="LGAS324831:G1G6Y-766-MONOMER"/>
<dbReference type="UniPathway" id="UPA00085"/>
<dbReference type="Proteomes" id="UP000000664">
    <property type="component" value="Chromosome"/>
</dbReference>
<dbReference type="GO" id="GO:0005737">
    <property type="term" value="C:cytoplasm"/>
    <property type="evidence" value="ECO:0007669"/>
    <property type="project" value="UniProtKB-SubCell"/>
</dbReference>
<dbReference type="GO" id="GO:0043811">
    <property type="term" value="F:phosphate:acyl-[acyl carrier protein] acyltransferase activity"/>
    <property type="evidence" value="ECO:0007669"/>
    <property type="project" value="UniProtKB-UniRule"/>
</dbReference>
<dbReference type="GO" id="GO:0006633">
    <property type="term" value="P:fatty acid biosynthetic process"/>
    <property type="evidence" value="ECO:0007669"/>
    <property type="project" value="UniProtKB-UniRule"/>
</dbReference>
<dbReference type="GO" id="GO:0008654">
    <property type="term" value="P:phospholipid biosynthetic process"/>
    <property type="evidence" value="ECO:0007669"/>
    <property type="project" value="UniProtKB-KW"/>
</dbReference>
<dbReference type="Gene3D" id="3.40.718.10">
    <property type="entry name" value="Isopropylmalate Dehydrogenase"/>
    <property type="match status" value="1"/>
</dbReference>
<dbReference type="HAMAP" id="MF_00019">
    <property type="entry name" value="PlsX"/>
    <property type="match status" value="1"/>
</dbReference>
<dbReference type="InterPro" id="IPR003664">
    <property type="entry name" value="FA_synthesis"/>
</dbReference>
<dbReference type="InterPro" id="IPR012281">
    <property type="entry name" value="Phospholipid_synth_PlsX-like"/>
</dbReference>
<dbReference type="NCBIfam" id="TIGR00182">
    <property type="entry name" value="plsX"/>
    <property type="match status" value="1"/>
</dbReference>
<dbReference type="PANTHER" id="PTHR30100">
    <property type="entry name" value="FATTY ACID/PHOSPHOLIPID SYNTHESIS PROTEIN PLSX"/>
    <property type="match status" value="1"/>
</dbReference>
<dbReference type="PANTHER" id="PTHR30100:SF1">
    <property type="entry name" value="PHOSPHATE ACYLTRANSFERASE"/>
    <property type="match status" value="1"/>
</dbReference>
<dbReference type="Pfam" id="PF02504">
    <property type="entry name" value="FA_synthesis"/>
    <property type="match status" value="1"/>
</dbReference>
<dbReference type="PIRSF" id="PIRSF002465">
    <property type="entry name" value="Phsphlp_syn_PlsX"/>
    <property type="match status" value="1"/>
</dbReference>
<dbReference type="SUPFAM" id="SSF53659">
    <property type="entry name" value="Isocitrate/Isopropylmalate dehydrogenase-like"/>
    <property type="match status" value="1"/>
</dbReference>
<proteinExistence type="inferred from homology"/>
<sequence>MKKIAIDAMGGENAPKAIIDAVLKAKPKLKDIEFILFGDAEKINQLIPNEQKERIEVVATSEVIVDSDEPVRAIRRKKDSSMVVAANYVKAGKADALFSLGNTGALLACGIFIIGRIKGVERPALMPTLPSAKSEQGFNIIDVGANAQSKPEYLVQWAQMANFYAQKVRNIQNPTVALLNNGAEDDKGDPLHQEAYKLLKETKLNFIGNVEGNDLMEGKADVIVTDGFTGNATLKAIEGTASVILRLLKDSLLNNGLRPKVGALLAKPGLTALKKRFDTARYGGAVLLGVNAPVVKTHGRSNIRPIYYTLLQIDKMLSQDLVGEYKKYFSESR</sequence>
<name>PLSX_LACGA</name>
<organism>
    <name type="scientific">Lactobacillus gasseri (strain ATCC 33323 / DSM 20243 / BCRC 14619 / CIP 102991 / JCM 1131 / KCTC 3163 / NCIMB 11718 / NCTC 13722 / AM63)</name>
    <dbReference type="NCBI Taxonomy" id="324831"/>
    <lineage>
        <taxon>Bacteria</taxon>
        <taxon>Bacillati</taxon>
        <taxon>Bacillota</taxon>
        <taxon>Bacilli</taxon>
        <taxon>Lactobacillales</taxon>
        <taxon>Lactobacillaceae</taxon>
        <taxon>Lactobacillus</taxon>
    </lineage>
</organism>
<reference key="1">
    <citation type="journal article" date="2006" name="Proc. Natl. Acad. Sci. U.S.A.">
        <title>Comparative genomics of the lactic acid bacteria.</title>
        <authorList>
            <person name="Makarova K.S."/>
            <person name="Slesarev A."/>
            <person name="Wolf Y.I."/>
            <person name="Sorokin A."/>
            <person name="Mirkin B."/>
            <person name="Koonin E.V."/>
            <person name="Pavlov A."/>
            <person name="Pavlova N."/>
            <person name="Karamychev V."/>
            <person name="Polouchine N."/>
            <person name="Shakhova V."/>
            <person name="Grigoriev I."/>
            <person name="Lou Y."/>
            <person name="Rohksar D."/>
            <person name="Lucas S."/>
            <person name="Huang K."/>
            <person name="Goodstein D.M."/>
            <person name="Hawkins T."/>
            <person name="Plengvidhya V."/>
            <person name="Welker D."/>
            <person name="Hughes J."/>
            <person name="Goh Y."/>
            <person name="Benson A."/>
            <person name="Baldwin K."/>
            <person name="Lee J.-H."/>
            <person name="Diaz-Muniz I."/>
            <person name="Dosti B."/>
            <person name="Smeianov V."/>
            <person name="Wechter W."/>
            <person name="Barabote R."/>
            <person name="Lorca G."/>
            <person name="Altermann E."/>
            <person name="Barrangou R."/>
            <person name="Ganesan B."/>
            <person name="Xie Y."/>
            <person name="Rawsthorne H."/>
            <person name="Tamir D."/>
            <person name="Parker C."/>
            <person name="Breidt F."/>
            <person name="Broadbent J.R."/>
            <person name="Hutkins R."/>
            <person name="O'Sullivan D."/>
            <person name="Steele J."/>
            <person name="Unlu G."/>
            <person name="Saier M.H. Jr."/>
            <person name="Klaenhammer T."/>
            <person name="Richardson P."/>
            <person name="Kozyavkin S."/>
            <person name="Weimer B.C."/>
            <person name="Mills D.A."/>
        </authorList>
    </citation>
    <scope>NUCLEOTIDE SEQUENCE [LARGE SCALE GENOMIC DNA]</scope>
    <source>
        <strain>ATCC 33323 / DSM 20243 / BCRC 14619 / CIP 102991 / JCM 1131 / KCTC 3163 / NCIMB 11718 / NCTC 13722 / AM63</strain>
    </source>
</reference>
<accession>Q044F9</accession>
<gene>
    <name evidence="1" type="primary">plsX</name>
    <name type="ordered locus">LGAS_0772</name>
</gene>
<protein>
    <recommendedName>
        <fullName evidence="1">Phosphate acyltransferase</fullName>
        <ecNumber evidence="1">2.3.1.274</ecNumber>
    </recommendedName>
    <alternativeName>
        <fullName evidence="1">Acyl-ACP phosphotransacylase</fullName>
    </alternativeName>
    <alternativeName>
        <fullName evidence="1">Acyl-[acyl-carrier-protein]--phosphate acyltransferase</fullName>
    </alternativeName>
    <alternativeName>
        <fullName evidence="1">Phosphate-acyl-ACP acyltransferase</fullName>
    </alternativeName>
</protein>
<feature type="chain" id="PRO_0000329235" description="Phosphate acyltransferase">
    <location>
        <begin position="1"/>
        <end position="333"/>
    </location>
</feature>
<comment type="function">
    <text evidence="1">Catalyzes the reversible formation of acyl-phosphate (acyl-PO(4)) from acyl-[acyl-carrier-protein] (acyl-ACP). This enzyme utilizes acyl-ACP as fatty acyl donor, but not acyl-CoA.</text>
</comment>
<comment type="catalytic activity">
    <reaction evidence="1">
        <text>a fatty acyl-[ACP] + phosphate = an acyl phosphate + holo-[ACP]</text>
        <dbReference type="Rhea" id="RHEA:42292"/>
        <dbReference type="Rhea" id="RHEA-COMP:9685"/>
        <dbReference type="Rhea" id="RHEA-COMP:14125"/>
        <dbReference type="ChEBI" id="CHEBI:43474"/>
        <dbReference type="ChEBI" id="CHEBI:59918"/>
        <dbReference type="ChEBI" id="CHEBI:64479"/>
        <dbReference type="ChEBI" id="CHEBI:138651"/>
        <dbReference type="EC" id="2.3.1.274"/>
    </reaction>
</comment>
<comment type="pathway">
    <text evidence="1">Lipid metabolism; phospholipid metabolism.</text>
</comment>
<comment type="subunit">
    <text evidence="1">Homodimer. Probably interacts with PlsY.</text>
</comment>
<comment type="subcellular location">
    <subcellularLocation>
        <location evidence="1">Cytoplasm</location>
    </subcellularLocation>
    <text evidence="1">Associated with the membrane possibly through PlsY.</text>
</comment>
<comment type="similarity">
    <text evidence="1">Belongs to the PlsX family.</text>
</comment>
<comment type="sequence caution" evidence="2">
    <conflict type="erroneous initiation">
        <sequence resource="EMBL-CDS" id="ABJ60163"/>
    </conflict>
</comment>
<keyword id="KW-0963">Cytoplasm</keyword>
<keyword id="KW-0444">Lipid biosynthesis</keyword>
<keyword id="KW-0443">Lipid metabolism</keyword>
<keyword id="KW-0594">Phospholipid biosynthesis</keyword>
<keyword id="KW-1208">Phospholipid metabolism</keyword>
<keyword id="KW-0808">Transferase</keyword>